<accession>Q8V2N2</accession>
<evidence type="ECO:0000250" key="1"/>
<evidence type="ECO:0000305" key="2"/>
<organismHost>
    <name type="scientific">Camelus</name>
    <dbReference type="NCBI Taxonomy" id="9836"/>
</organismHost>
<feature type="chain" id="PRO_0000099185" description="Intermediate transcription factor 3 large subunit">
    <location>
        <begin position="1"/>
        <end position="382"/>
    </location>
</feature>
<dbReference type="EMBL" id="AF438165">
    <property type="protein sequence ID" value="AAL73848.1"/>
    <property type="molecule type" value="Genomic_DNA"/>
</dbReference>
<dbReference type="RefSeq" id="NP_570531.1">
    <property type="nucleotide sequence ID" value="NC_003391.1"/>
</dbReference>
<dbReference type="SMR" id="Q8V2N2"/>
<dbReference type="KEGG" id="vg:932601"/>
<dbReference type="Proteomes" id="UP000152221">
    <property type="component" value="Genome"/>
</dbReference>
<dbReference type="InterPro" id="IPR008789">
    <property type="entry name" value="Poxvirus_intermed-TF"/>
</dbReference>
<dbReference type="Pfam" id="PF05718">
    <property type="entry name" value="Pox_int_trans"/>
    <property type="match status" value="1"/>
</dbReference>
<protein>
    <recommendedName>
        <fullName>Intermediate transcription factor 3 large subunit</fullName>
    </recommendedName>
    <alternativeName>
        <fullName>VITF-3 45 kDa subunit</fullName>
    </alternativeName>
</protein>
<organism>
    <name type="scientific">Camelpox virus (strain M-96)</name>
    <dbReference type="NCBI Taxonomy" id="203173"/>
    <lineage>
        <taxon>Viruses</taxon>
        <taxon>Varidnaviria</taxon>
        <taxon>Bamfordvirae</taxon>
        <taxon>Nucleocytoviricota</taxon>
        <taxon>Pokkesviricetes</taxon>
        <taxon>Chitovirales</taxon>
        <taxon>Poxviridae</taxon>
        <taxon>Chordopoxvirinae</taxon>
        <taxon>Orthopoxvirus</taxon>
        <taxon>Camelpox virus</taxon>
    </lineage>
</organism>
<keyword id="KW-0010">Activator</keyword>
<keyword id="KW-0804">Transcription</keyword>
<keyword id="KW-0805">Transcription regulation</keyword>
<gene>
    <name type="primary">VITF3L</name>
    <name type="ordered locus">CMLV141</name>
</gene>
<proteinExistence type="inferred from homology"/>
<sequence>MDNLFTFLHEIEDRYARTIFNFHLISCDEIGDIYGLMKERISSEDMFDNVVYNKDIHPAIKKLVYCDIQLTKHIINQNTYPVFNDSSQVKCCHYFDINSDNSNISSRTVEIFEREKSSLVSYIKTTNKKRKVNYGEIKKTVHGGTNANYFSGKKSDEYLSTTVRSNINQPWIKTISKRMRVDIINHSIVTRGKSSILQTIEIIFTNRTCVKIFKDSTMHIILSKDNDEKGCIHMIDKLFYVYYNLFLLFEDIIQNEYFKEVANVVNHVLTATALDEKLFLIKKMAEHDVYGVSNFKIGMFNLTFIKSLDHTVFPSLLDEDSKIKFFKGKKLNIVALRSLEDCINYVTKSENMIEMMKERSTILNSIDIETESVDRLKDLLLK</sequence>
<name>VTF3L_CAMPM</name>
<comment type="function">
    <text evidence="1">Acts with RNA polymerase to initiate transcription from intermediate gene promoters.</text>
</comment>
<comment type="subunit">
    <text evidence="1">Heterodimer of a 45 kDa and a 32 kDa subunit.</text>
</comment>
<comment type="similarity">
    <text evidence="2">Belongs to the poxviruses A23 family.</text>
</comment>
<reference key="1">
    <citation type="journal article" date="2002" name="Virology">
        <title>The genome of camelpox virus.</title>
        <authorList>
            <person name="Afonso C.L."/>
            <person name="Tulman E.R."/>
            <person name="Lu Z."/>
            <person name="Zsak L."/>
            <person name="Sandybaev N.T."/>
            <person name="Kerembekova U.Z."/>
            <person name="Zaitsev V.L."/>
            <person name="Kutish G.F."/>
            <person name="Rock D.L."/>
        </authorList>
    </citation>
    <scope>NUCLEOTIDE SEQUENCE [LARGE SCALE GENOMIC DNA]</scope>
</reference>